<feature type="chain" id="PRO_0000109519" description="Inactive signal peptidase IA">
    <location>
        <begin position="1"/>
        <end position="174"/>
    </location>
</feature>
<feature type="topological domain" description="Cytoplasmic" evidence="2">
    <location>
        <begin position="1"/>
        <end position="7"/>
    </location>
</feature>
<feature type="transmembrane region" description="Helical" evidence="2">
    <location>
        <begin position="8"/>
        <end position="28"/>
    </location>
</feature>
<feature type="topological domain" description="Extracellular" evidence="2">
    <location>
        <begin position="29"/>
        <end position="174"/>
    </location>
</feature>
<name>LEPH_STAAC</name>
<protein>
    <recommendedName>
        <fullName>Inactive signal peptidase IA</fullName>
    </recommendedName>
</protein>
<comment type="function">
    <text evidence="1">Catalytically inactive.</text>
</comment>
<comment type="subcellular location">
    <subcellularLocation>
        <location evidence="3">Cell membrane</location>
        <topology evidence="3">Single-pass type II membrane protein</topology>
    </subcellularLocation>
</comment>
<comment type="similarity">
    <text evidence="3">Belongs to the peptidase S26 family.</text>
</comment>
<reference key="1">
    <citation type="journal article" date="2005" name="J. Bacteriol.">
        <title>Insights on evolution of virulence and resistance from the complete genome analysis of an early methicillin-resistant Staphylococcus aureus strain and a biofilm-producing methicillin-resistant Staphylococcus epidermidis strain.</title>
        <authorList>
            <person name="Gill S.R."/>
            <person name="Fouts D.E."/>
            <person name="Archer G.L."/>
            <person name="Mongodin E.F."/>
            <person name="DeBoy R.T."/>
            <person name="Ravel J."/>
            <person name="Paulsen I.T."/>
            <person name="Kolonay J.F."/>
            <person name="Brinkac L.M."/>
            <person name="Beanan M.J."/>
            <person name="Dodson R.J."/>
            <person name="Daugherty S.C."/>
            <person name="Madupu R."/>
            <person name="Angiuoli S.V."/>
            <person name="Durkin A.S."/>
            <person name="Haft D.H."/>
            <person name="Vamathevan J.J."/>
            <person name="Khouri H."/>
            <person name="Utterback T.R."/>
            <person name="Lee C."/>
            <person name="Dimitrov G."/>
            <person name="Jiang L."/>
            <person name="Qin H."/>
            <person name="Weidman J."/>
            <person name="Tran K."/>
            <person name="Kang K.H."/>
            <person name="Hance I.R."/>
            <person name="Nelson K.E."/>
            <person name="Fraser C.M."/>
        </authorList>
    </citation>
    <scope>NUCLEOTIDE SEQUENCE [LARGE SCALE GENOMIC DNA]</scope>
    <source>
        <strain>COL</strain>
    </source>
</reference>
<gene>
    <name type="primary">spsA</name>
    <name type="ordered locus">SACOL0968</name>
</gene>
<organism>
    <name type="scientific">Staphylococcus aureus (strain COL)</name>
    <dbReference type="NCBI Taxonomy" id="93062"/>
    <lineage>
        <taxon>Bacteria</taxon>
        <taxon>Bacillati</taxon>
        <taxon>Bacillota</taxon>
        <taxon>Bacilli</taxon>
        <taxon>Bacillales</taxon>
        <taxon>Staphylococcaceae</taxon>
        <taxon>Staphylococcus</taxon>
    </lineage>
</organism>
<keyword id="KW-1003">Cell membrane</keyword>
<keyword id="KW-0472">Membrane</keyword>
<keyword id="KW-0812">Transmembrane</keyword>
<keyword id="KW-1133">Transmembrane helix</keyword>
<sequence>MKKVVKYLISLILAIIIVLFVQTFVIVGHVIPNNDMSPTLNKGDRVIVNKIKVTFNQLNNGDIITYRRGNEIYTSRIIAKPGQSMAFRQGQLYRDDRPVDASYAKNRKIKDFSLRNFKELDGDIIPPNNFVVLNDQDNNKHDSRQFGLIDKKDIIGNVSLRYYPFSKWTVQFKS</sequence>
<evidence type="ECO:0000250" key="1"/>
<evidence type="ECO:0000255" key="2"/>
<evidence type="ECO:0000305" key="3"/>
<accession>Q5HHC0</accession>
<proteinExistence type="inferred from homology"/>
<dbReference type="EMBL" id="CP000046">
    <property type="protein sequence ID" value="AAW37936.1"/>
    <property type="molecule type" value="Genomic_DNA"/>
</dbReference>
<dbReference type="SMR" id="Q5HHC0"/>
<dbReference type="KEGG" id="sac:SACOL0968"/>
<dbReference type="HOGENOM" id="CLU_028723_5_0_9"/>
<dbReference type="Proteomes" id="UP000000530">
    <property type="component" value="Chromosome"/>
</dbReference>
<dbReference type="GO" id="GO:0005886">
    <property type="term" value="C:plasma membrane"/>
    <property type="evidence" value="ECO:0007669"/>
    <property type="project" value="UniProtKB-SubCell"/>
</dbReference>
<dbReference type="GO" id="GO:0004252">
    <property type="term" value="F:serine-type endopeptidase activity"/>
    <property type="evidence" value="ECO:0007669"/>
    <property type="project" value="InterPro"/>
</dbReference>
<dbReference type="GO" id="GO:0006465">
    <property type="term" value="P:signal peptide processing"/>
    <property type="evidence" value="ECO:0007669"/>
    <property type="project" value="InterPro"/>
</dbReference>
<dbReference type="CDD" id="cd06530">
    <property type="entry name" value="S26_SPase_I"/>
    <property type="match status" value="1"/>
</dbReference>
<dbReference type="Gene3D" id="2.10.109.10">
    <property type="entry name" value="Umud Fragment, subunit A"/>
    <property type="match status" value="1"/>
</dbReference>
<dbReference type="InterPro" id="IPR036286">
    <property type="entry name" value="LexA/Signal_pep-like_sf"/>
</dbReference>
<dbReference type="InterPro" id="IPR000223">
    <property type="entry name" value="Pept_S26A_signal_pept_1"/>
</dbReference>
<dbReference type="InterPro" id="IPR019533">
    <property type="entry name" value="Peptidase_S26"/>
</dbReference>
<dbReference type="NCBIfam" id="TIGR02227">
    <property type="entry name" value="sigpep_I_bact"/>
    <property type="match status" value="1"/>
</dbReference>
<dbReference type="PANTHER" id="PTHR43390:SF1">
    <property type="entry name" value="CHLOROPLAST PROCESSING PEPTIDASE"/>
    <property type="match status" value="1"/>
</dbReference>
<dbReference type="PANTHER" id="PTHR43390">
    <property type="entry name" value="SIGNAL PEPTIDASE I"/>
    <property type="match status" value="1"/>
</dbReference>
<dbReference type="Pfam" id="PF10502">
    <property type="entry name" value="Peptidase_S26"/>
    <property type="match status" value="1"/>
</dbReference>
<dbReference type="PRINTS" id="PR00727">
    <property type="entry name" value="LEADERPTASE"/>
</dbReference>
<dbReference type="SUPFAM" id="SSF51306">
    <property type="entry name" value="LexA/Signal peptidase"/>
    <property type="match status" value="1"/>
</dbReference>